<name>OAMB_DROME</name>
<gene>
    <name evidence="25" type="primary">Oamb</name>
    <name evidence="18" type="synonym">oa1</name>
    <name evidence="25" type="ORF">CG3856</name>
</gene>
<protein>
    <recommendedName>
        <fullName evidence="20">Octopamine receptor Oamb</fullName>
    </recommendedName>
    <alternativeName>
        <fullName evidence="19">Octopamine receptor in mushroom bodies</fullName>
    </alternativeName>
</protein>
<sequence>MNETECEDLIKSVKWTEPANLISLAVLEFINVLVIGGNCLVIAAVFCSNKLRSVTNFFIVNLAVADLLVGLAVLPFSATWEVFKVWIFGDLWCRIWLAVDVWMCTASILNLCAISLDRYVAVTRPVTYPSIMSTKKAKSLIAGIWVLSFFICFPPLVGWKDQKAVIQPTYPKGNHTLYYTTTMSSSEDGQLGLDSIKDQGEASLPPSPPHIGNGNAYNPYDPGFAPIDGSAEIRIAAIDSTSTSTTATTTTTASSSSTTETEMDLDLLNAPPQNRPQTISGSCPWKCELTNDRGYVLYSALGSFYIPMFVMLFFYWRIYRAAVRTTRAINQGFKTTKGSKGIGSRFEEQRLTLRIHRGRGSNQQDSMHSNGSTQSTTTTLGTPSPERLSKYATRRLHHHDKIKISVSYPSSENISELAGHGDVGHERRQSGNALFAVHYNGTNGRESTESQLYRQQQQHGVASSCYLQVGKGLPELARRQSNTSEAGGSGHSRPANKKMGRRNIKAQVKRFRMETKAAKTLAIIVGMFIFCWCPFFTMYIIRPFCQDCVDPLLFSVLFWLGYCNSAVNPMIYALFSKDFRFAFKRIICRCFCSRQSVSLKSSRRGSDMSAIRIRARTPSITPSAAAHSFGDESELHHSEMSNDPR</sequence>
<keyword id="KW-0025">Alternative splicing</keyword>
<keyword id="KW-0085">Behavior</keyword>
<keyword id="KW-1003">Cell membrane</keyword>
<keyword id="KW-1015">Disulfide bond</keyword>
<keyword id="KW-0297">G-protein coupled receptor</keyword>
<keyword id="KW-0325">Glycoprotein</keyword>
<keyword id="KW-0472">Membrane</keyword>
<keyword id="KW-0675">Receptor</keyword>
<keyword id="KW-1185">Reference proteome</keyword>
<keyword id="KW-0804">Transcription</keyword>
<keyword id="KW-0805">Transcription regulation</keyword>
<keyword id="KW-0807">Transducer</keyword>
<keyword id="KW-0812">Transmembrane</keyword>
<keyword id="KW-1133">Transmembrane helix</keyword>
<comment type="function">
    <text evidence="6 7 8 9 10 11 12 13 14 16 17">Receptor for octopamine (OA) which is a neurotransmitter, neurohormone and neuromodulator in invertebrates (PubMed:15816867, PubMed:9570796). Stimulates intracellular accumulation of cAMP and Ca(2+) following ligand binding (PubMed:15816867, PubMed:9570796). Required for ovulation (PubMed:14623240, PubMed:19262750). Following activation on mature follicle cells by OA, induces activity of the metalloprotease Mmp2 which leads to breakdown of the posterior follicle wall, resulting in ovulation (PubMed:26473732). Ligand binding probably also leads to activation of CamKII which is also required for ovulation (PubMed:19262750). Modulates sleep/wake behavior by acting in neurons of the pars intercerebralis to promote wakefulness (PubMed:20223202). Plays a role in courtship conditioning where the courtship behavior of males rejected by already mated females is inhibited with further females (PubMed:23055498). Required in the mushroom body for appetitive olfactory learning (PubMed:23103875, PubMed:23345239). Specifically conveys the short-term reinforcing effects of sweet taste (PubMed:23103875, PubMed:25728694). In insulin-producing cells of the brain, plays a role in inhibiting transcription of insulin-like peptide Ilp3 (PubMed:24923784). Also plays a role in social behavior by modulating male agression (PubMed:24923784).</text>
</comment>
<comment type="subcellular location">
    <subcellularLocation>
        <location evidence="20">Cell membrane</location>
        <topology evidence="1">Multi-pass membrane protein</topology>
    </subcellularLocation>
</comment>
<comment type="alternative products">
    <event type="alternative splicing"/>
    <isoform>
        <id>Q7JQF1-1</id>
        <name evidence="25">C</name>
        <name evidence="25">F</name>
        <name evidence="18">OA1B</name>
        <sequence type="displayed"/>
    </isoform>
    <isoform>
        <id>Q7JQF1-2</id>
        <name evidence="25">B</name>
        <name evidence="18">OA1A</name>
        <sequence type="described" ref="VSP_058289 VSP_058290 VSP_058291 VSP_058292 VSP_058293 VSP_058294 VSP_058295 VSP_058296 VSP_058297"/>
    </isoform>
</comment>
<comment type="tissue specificity">
    <text evidence="6 8 15 17">Highly enriched in mushroom body neuropil and in the ellipsoid body (at protein level) (PubMed:9570796). Expressed in oviduct epithelium (at protein level) (PubMed:19262750). Expressed in the adult and larval brain, thoracic and abdominal ganglia, terminal cells of the larval tracheal system, muscle, mature eggs and reproductive system (PubMed:14623240, PubMed:25743690).</text>
</comment>
<comment type="developmental stage">
    <text evidence="7">Isoform C: Barely detectable in adult body but is expressed in adult head and third instar larva. Isoform B: Detected in adult head, adult body, pupa, third instar larva, 0-4 hour embryo, 0-18 hour embryo and 17-19 hour embryo with lowest expression observed in adult body and 17-19 hour embryo.</text>
</comment>
<comment type="disruption phenotype">
    <text evidence="6 9 12 16">Viable with no gross anatomical defects and females display normal courtship and copulation but are impaired in ovulation (PubMed:14623240). Many mature eggs are retained in the ovaries with mutant females laying significantly fewer eggs and taking much longer to ovulate an egg (PubMed:14623240, PubMed:26473732). Increased sleep with longer sleep bouts during the night and a greater number of sleep bouts during the day (PubMed:20223202). Severely impaired learning in appetitive olfactory conditioning which tests the capacity to learn and remember the odor associated with a sugar reward (PubMed:23345239).</text>
</comment>
<comment type="similarity">
    <text evidence="4">Belongs to the G-protein coupled receptor 1 family.</text>
</comment>
<organism evidence="22">
    <name type="scientific">Drosophila melanogaster</name>
    <name type="common">Fruit fly</name>
    <dbReference type="NCBI Taxonomy" id="7227"/>
    <lineage>
        <taxon>Eukaryota</taxon>
        <taxon>Metazoa</taxon>
        <taxon>Ecdysozoa</taxon>
        <taxon>Arthropoda</taxon>
        <taxon>Hexapoda</taxon>
        <taxon>Insecta</taxon>
        <taxon>Pterygota</taxon>
        <taxon>Neoptera</taxon>
        <taxon>Endopterygota</taxon>
        <taxon>Diptera</taxon>
        <taxon>Brachycera</taxon>
        <taxon>Muscomorpha</taxon>
        <taxon>Ephydroidea</taxon>
        <taxon>Drosophilidae</taxon>
        <taxon>Drosophila</taxon>
        <taxon>Sophophora</taxon>
    </lineage>
</organism>
<accession>Q7JQF1</accession>
<accession>O61730</accession>
<accession>Q9VDJ6</accession>
<feature type="chain" id="PRO_0000436178" description="Octopamine receptor Oamb">
    <location>
        <begin position="1"/>
        <end position="645"/>
    </location>
</feature>
<feature type="topological domain" description="Extracellular" evidence="20">
    <location>
        <begin position="1"/>
        <end position="25"/>
    </location>
</feature>
<feature type="transmembrane region" description="Helical; Name=1" evidence="1">
    <location>
        <begin position="26"/>
        <end position="46"/>
    </location>
</feature>
<feature type="topological domain" description="Cytoplasmic" evidence="20">
    <location>
        <begin position="47"/>
        <end position="56"/>
    </location>
</feature>
<feature type="transmembrane region" description="Helical; Name=2" evidence="1">
    <location>
        <begin position="57"/>
        <end position="77"/>
    </location>
</feature>
<feature type="topological domain" description="Extracellular" evidence="20">
    <location>
        <begin position="78"/>
        <end position="94"/>
    </location>
</feature>
<feature type="transmembrane region" description="Helical; Name=3" evidence="1">
    <location>
        <begin position="95"/>
        <end position="115"/>
    </location>
</feature>
<feature type="topological domain" description="Cytoplasmic" evidence="20">
    <location>
        <begin position="116"/>
        <end position="138"/>
    </location>
</feature>
<feature type="transmembrane region" description="Helical; Name=4" evidence="1">
    <location>
        <begin position="139"/>
        <end position="159"/>
    </location>
</feature>
<feature type="topological domain" description="Extracellular" evidence="20">
    <location>
        <begin position="160"/>
        <end position="295"/>
    </location>
</feature>
<feature type="transmembrane region" description="Helical; Name=5" evidence="1">
    <location>
        <begin position="296"/>
        <end position="316"/>
    </location>
</feature>
<feature type="topological domain" description="Cytoplasmic" evidence="20">
    <location>
        <begin position="317"/>
        <end position="520"/>
    </location>
</feature>
<feature type="transmembrane region" description="Helical; Name=6" evidence="1">
    <location>
        <begin position="521"/>
        <end position="541"/>
    </location>
</feature>
<feature type="topological domain" description="Extracellular" evidence="20">
    <location>
        <begin position="542"/>
        <end position="551"/>
    </location>
</feature>
<feature type="transmembrane region" description="Helical; Name=7" evidence="1">
    <location>
        <begin position="552"/>
        <end position="572"/>
    </location>
</feature>
<feature type="topological domain" description="Cytoplasmic" evidence="20">
    <location>
        <begin position="573"/>
        <end position="645"/>
    </location>
</feature>
<feature type="region of interest" description="Disordered" evidence="5">
    <location>
        <begin position="190"/>
        <end position="212"/>
    </location>
</feature>
<feature type="region of interest" description="Disordered" evidence="5">
    <location>
        <begin position="358"/>
        <end position="386"/>
    </location>
</feature>
<feature type="region of interest" description="Disordered" evidence="5">
    <location>
        <begin position="479"/>
        <end position="500"/>
    </location>
</feature>
<feature type="region of interest" description="Disordered" evidence="5">
    <location>
        <begin position="621"/>
        <end position="645"/>
    </location>
</feature>
<feature type="compositionally biased region" description="Low complexity" evidence="5">
    <location>
        <begin position="369"/>
        <end position="385"/>
    </location>
</feature>
<feature type="compositionally biased region" description="Basic and acidic residues" evidence="5">
    <location>
        <begin position="629"/>
        <end position="645"/>
    </location>
</feature>
<feature type="glycosylation site" description="N-linked (GlcNAc...) asparagine" evidence="2">
    <location>
        <position position="2"/>
    </location>
</feature>
<feature type="glycosylation site" description="N-linked (GlcNAc...) asparagine" evidence="2">
    <location>
        <position position="174"/>
    </location>
</feature>
<feature type="disulfide bond" evidence="3">
    <location>
        <begin position="93"/>
        <end position="287"/>
    </location>
</feature>
<feature type="splice variant" id="VSP_058289" description="In isoform B." evidence="18">
    <original>KGIGSRFEEQRLT</original>
    <variation>PRESGNNRVDESQLI</variation>
    <location>
        <begin position="340"/>
        <end position="352"/>
    </location>
</feature>
<feature type="splice variant" id="VSP_058290" description="In isoform B." evidence="18">
    <original>GSNQQDSMHSNGSTQSTTTTLGTPSPERLSKYATRRLHHHDKIKISVSY</original>
    <variation>PCSTPQRTPLSVHSMSSTLSVNSNGGGGGAVASGLGASTEDHLQGGAPKRATSMRVCRQRHEKVAIKVSF</variation>
    <location>
        <begin position="360"/>
        <end position="408"/>
    </location>
</feature>
<feature type="splice variant" id="VSP_058291" description="In isoform B." evidence="18">
    <original>ISELAGHGDVGHERRQSGNALFAVHYNGTNGRESTESQLYRQQQQHGVASSCYLQVGKGLPELARRQSNTSEAGGSGHSRPANKKMGRRNIKA</original>
    <variation>VLDAGQQPQASPHYAVISSANGRRASFKTSLFDIGETTFNLDAAASGPGDLETGLSTTSLSAKKRAGKRSAKF</variation>
    <location>
        <begin position="414"/>
        <end position="506"/>
    </location>
</feature>
<feature type="splice variant" id="VSP_058292" description="In isoform B." evidence="18">
    <original>MFIFCWC</original>
    <variation>GFIVCWL</variation>
    <location>
        <begin position="527"/>
        <end position="533"/>
    </location>
</feature>
<feature type="splice variant" id="VSP_058293" description="In isoform B." evidence="18">
    <original>IIRPFCQDCVDPLL</original>
    <variation>LIRAFCDHCIQPTV</variation>
    <location>
        <begin position="540"/>
        <end position="553"/>
    </location>
</feature>
<feature type="splice variant" id="VSP_058294" description="In isoform B." evidence="18">
    <original>V</original>
    <variation>I</variation>
    <location>
        <position position="567"/>
    </location>
</feature>
<feature type="splice variant" id="VSP_058295" description="In isoform B.">
    <original>KDFRF</original>
    <variation>NEFRI</variation>
    <location>
        <begin position="577"/>
        <end position="581"/>
    </location>
</feature>
<feature type="splice variant" id="VSP_058296" description="In isoform B." evidence="18">
    <original>ICRCFCSRQSVSLKSSRRGSDMSAIRIRARTPSITPSAAAHSFGDESE</original>
    <variation>VCRCVCTRSGFRASENFQMIAARALMAPATFHKTISGCSDDGEGVDFS</variation>
    <location>
        <begin position="587"/>
        <end position="634"/>
    </location>
</feature>
<feature type="splice variant" id="VSP_058297" description="In isoform B." evidence="18">
    <location>
        <begin position="635"/>
        <end position="645"/>
    </location>
</feature>
<feature type="sequence conflict" description="In Ref. 1; AAC17442 and 2; CAB38026." evidence="20" ref="1 2">
    <original>T</original>
    <variation>I</variation>
    <location>
        <position position="180"/>
    </location>
</feature>
<proteinExistence type="evidence at protein level"/>
<reference evidence="21" key="1">
    <citation type="journal article" date="1998" name="J. Neurosci.">
        <title>A novel octopamine receptor with preferential expression in Drosophila mushroom bodies.</title>
        <authorList>
            <person name="Han K.A."/>
            <person name="Millar N.S."/>
            <person name="Davis R.L."/>
        </authorList>
    </citation>
    <scope>NUCLEOTIDE SEQUENCE [MRNA] (ISOFORM B)</scope>
    <scope>FUNCTION</scope>
    <scope>TISSUE SPECIFICITY</scope>
</reference>
<reference evidence="23 24" key="2">
    <citation type="journal article" date="2005" name="J. Neurochem.">
        <title>A family of octopamine receptors that specifically induce cyclic AMP production or Ca2+ release in Drosophila melanogaster.</title>
        <authorList>
            <person name="Balfanz S."/>
            <person name="Struenker T."/>
            <person name="Frings S."/>
            <person name="Baumann A."/>
        </authorList>
    </citation>
    <scope>NUCLEOTIDE SEQUENCE [MRNA] (ISOFORMS B AND C)</scope>
    <scope>FUNCTION</scope>
    <scope>DEVELOPMENTAL STAGE</scope>
</reference>
<reference evidence="26" key="3">
    <citation type="journal article" date="2000" name="Science">
        <title>The genome sequence of Drosophila melanogaster.</title>
        <authorList>
            <person name="Adams M.D."/>
            <person name="Celniker S.E."/>
            <person name="Holt R.A."/>
            <person name="Evans C.A."/>
            <person name="Gocayne J.D."/>
            <person name="Amanatides P.G."/>
            <person name="Scherer S.E."/>
            <person name="Li P.W."/>
            <person name="Hoskins R.A."/>
            <person name="Galle R.F."/>
            <person name="George R.A."/>
            <person name="Lewis S.E."/>
            <person name="Richards S."/>
            <person name="Ashburner M."/>
            <person name="Henderson S.N."/>
            <person name="Sutton G.G."/>
            <person name="Wortman J.R."/>
            <person name="Yandell M.D."/>
            <person name="Zhang Q."/>
            <person name="Chen L.X."/>
            <person name="Brandon R.C."/>
            <person name="Rogers Y.-H.C."/>
            <person name="Blazej R.G."/>
            <person name="Champe M."/>
            <person name="Pfeiffer B.D."/>
            <person name="Wan K.H."/>
            <person name="Doyle C."/>
            <person name="Baxter E.G."/>
            <person name="Helt G."/>
            <person name="Nelson C.R."/>
            <person name="Miklos G.L.G."/>
            <person name="Abril J.F."/>
            <person name="Agbayani A."/>
            <person name="An H.-J."/>
            <person name="Andrews-Pfannkoch C."/>
            <person name="Baldwin D."/>
            <person name="Ballew R.M."/>
            <person name="Basu A."/>
            <person name="Baxendale J."/>
            <person name="Bayraktaroglu L."/>
            <person name="Beasley E.M."/>
            <person name="Beeson K.Y."/>
            <person name="Benos P.V."/>
            <person name="Berman B.P."/>
            <person name="Bhandari D."/>
            <person name="Bolshakov S."/>
            <person name="Borkova D."/>
            <person name="Botchan M.R."/>
            <person name="Bouck J."/>
            <person name="Brokstein P."/>
            <person name="Brottier P."/>
            <person name="Burtis K.C."/>
            <person name="Busam D.A."/>
            <person name="Butler H."/>
            <person name="Cadieu E."/>
            <person name="Center A."/>
            <person name="Chandra I."/>
            <person name="Cherry J.M."/>
            <person name="Cawley S."/>
            <person name="Dahlke C."/>
            <person name="Davenport L.B."/>
            <person name="Davies P."/>
            <person name="de Pablos B."/>
            <person name="Delcher A."/>
            <person name="Deng Z."/>
            <person name="Mays A.D."/>
            <person name="Dew I."/>
            <person name="Dietz S.M."/>
            <person name="Dodson K."/>
            <person name="Doup L.E."/>
            <person name="Downes M."/>
            <person name="Dugan-Rocha S."/>
            <person name="Dunkov B.C."/>
            <person name="Dunn P."/>
            <person name="Durbin K.J."/>
            <person name="Evangelista C.C."/>
            <person name="Ferraz C."/>
            <person name="Ferriera S."/>
            <person name="Fleischmann W."/>
            <person name="Fosler C."/>
            <person name="Gabrielian A.E."/>
            <person name="Garg N.S."/>
            <person name="Gelbart W.M."/>
            <person name="Glasser K."/>
            <person name="Glodek A."/>
            <person name="Gong F."/>
            <person name="Gorrell J.H."/>
            <person name="Gu Z."/>
            <person name="Guan P."/>
            <person name="Harris M."/>
            <person name="Harris N.L."/>
            <person name="Harvey D.A."/>
            <person name="Heiman T.J."/>
            <person name="Hernandez J.R."/>
            <person name="Houck J."/>
            <person name="Hostin D."/>
            <person name="Houston K.A."/>
            <person name="Howland T.J."/>
            <person name="Wei M.-H."/>
            <person name="Ibegwam C."/>
            <person name="Jalali M."/>
            <person name="Kalush F."/>
            <person name="Karpen G.H."/>
            <person name="Ke Z."/>
            <person name="Kennison J.A."/>
            <person name="Ketchum K.A."/>
            <person name="Kimmel B.E."/>
            <person name="Kodira C.D."/>
            <person name="Kraft C.L."/>
            <person name="Kravitz S."/>
            <person name="Kulp D."/>
            <person name="Lai Z."/>
            <person name="Lasko P."/>
            <person name="Lei Y."/>
            <person name="Levitsky A.A."/>
            <person name="Li J.H."/>
            <person name="Li Z."/>
            <person name="Liang Y."/>
            <person name="Lin X."/>
            <person name="Liu X."/>
            <person name="Mattei B."/>
            <person name="McIntosh T.C."/>
            <person name="McLeod M.P."/>
            <person name="McPherson D."/>
            <person name="Merkulov G."/>
            <person name="Milshina N.V."/>
            <person name="Mobarry C."/>
            <person name="Morris J."/>
            <person name="Moshrefi A."/>
            <person name="Mount S.M."/>
            <person name="Moy M."/>
            <person name="Murphy B."/>
            <person name="Murphy L."/>
            <person name="Muzny D.M."/>
            <person name="Nelson D.L."/>
            <person name="Nelson D.R."/>
            <person name="Nelson K.A."/>
            <person name="Nixon K."/>
            <person name="Nusskern D.R."/>
            <person name="Pacleb J.M."/>
            <person name="Palazzolo M."/>
            <person name="Pittman G.S."/>
            <person name="Pan S."/>
            <person name="Pollard J."/>
            <person name="Puri V."/>
            <person name="Reese M.G."/>
            <person name="Reinert K."/>
            <person name="Remington K."/>
            <person name="Saunders R.D.C."/>
            <person name="Scheeler F."/>
            <person name="Shen H."/>
            <person name="Shue B.C."/>
            <person name="Siden-Kiamos I."/>
            <person name="Simpson M."/>
            <person name="Skupski M.P."/>
            <person name="Smith T.J."/>
            <person name="Spier E."/>
            <person name="Spradling A.C."/>
            <person name="Stapleton M."/>
            <person name="Strong R."/>
            <person name="Sun E."/>
            <person name="Svirskas R."/>
            <person name="Tector C."/>
            <person name="Turner R."/>
            <person name="Venter E."/>
            <person name="Wang A.H."/>
            <person name="Wang X."/>
            <person name="Wang Z.-Y."/>
            <person name="Wassarman D.A."/>
            <person name="Weinstock G.M."/>
            <person name="Weissenbach J."/>
            <person name="Williams S.M."/>
            <person name="Woodage T."/>
            <person name="Worley K.C."/>
            <person name="Wu D."/>
            <person name="Yang S."/>
            <person name="Yao Q.A."/>
            <person name="Ye J."/>
            <person name="Yeh R.-F."/>
            <person name="Zaveri J.S."/>
            <person name="Zhan M."/>
            <person name="Zhang G."/>
            <person name="Zhao Q."/>
            <person name="Zheng L."/>
            <person name="Zheng X.H."/>
            <person name="Zhong F.N."/>
            <person name="Zhong W."/>
            <person name="Zhou X."/>
            <person name="Zhu S.C."/>
            <person name="Zhu X."/>
            <person name="Smith H.O."/>
            <person name="Gibbs R.A."/>
            <person name="Myers E.W."/>
            <person name="Rubin G.M."/>
            <person name="Venter J.C."/>
        </authorList>
    </citation>
    <scope>NUCLEOTIDE SEQUENCE [LARGE SCALE GENOMIC DNA]</scope>
    <source>
        <strain evidence="26">Berkeley</strain>
    </source>
</reference>
<reference evidence="26" key="4">
    <citation type="journal article" date="2002" name="Genome Biol.">
        <title>Annotation of the Drosophila melanogaster euchromatic genome: a systematic review.</title>
        <authorList>
            <person name="Misra S."/>
            <person name="Crosby M.A."/>
            <person name="Mungall C.J."/>
            <person name="Matthews B.B."/>
            <person name="Campbell K.S."/>
            <person name="Hradecky P."/>
            <person name="Huang Y."/>
            <person name="Kaminker J.S."/>
            <person name="Millburn G.H."/>
            <person name="Prochnik S.E."/>
            <person name="Smith C.D."/>
            <person name="Tupy J.L."/>
            <person name="Whitfield E.J."/>
            <person name="Bayraktaroglu L."/>
            <person name="Berman B.P."/>
            <person name="Bettencourt B.R."/>
            <person name="Celniker S.E."/>
            <person name="de Grey A.D.N.J."/>
            <person name="Drysdale R.A."/>
            <person name="Harris N.L."/>
            <person name="Richter J."/>
            <person name="Russo S."/>
            <person name="Schroeder A.J."/>
            <person name="Shu S.Q."/>
            <person name="Stapleton M."/>
            <person name="Yamada C."/>
            <person name="Ashburner M."/>
            <person name="Gelbart W.M."/>
            <person name="Rubin G.M."/>
            <person name="Lewis S.E."/>
        </authorList>
    </citation>
    <scope>GENOME REANNOTATION</scope>
    <source>
        <strain evidence="26">Berkeley</strain>
    </source>
</reference>
<reference evidence="22" key="5">
    <citation type="submission" date="2003-08" db="EMBL/GenBank/DDBJ databases">
        <authorList>
            <person name="Stapleton M."/>
            <person name="Brokstein P."/>
            <person name="Hong L."/>
            <person name="Agbayani A."/>
            <person name="Carlson J."/>
            <person name="Champe M."/>
            <person name="Chavez C."/>
            <person name="Dorsett V."/>
            <person name="Dresnek D."/>
            <person name="Farfan D."/>
            <person name="Frise E."/>
            <person name="George R."/>
            <person name="Gonzalez M."/>
            <person name="Guarin H."/>
            <person name="Kronmiller B."/>
            <person name="Li P."/>
            <person name="Liao G."/>
            <person name="Miranda A."/>
            <person name="Mungall C.J."/>
            <person name="Nunoo J."/>
            <person name="Pacleb J."/>
            <person name="Paragas V."/>
            <person name="Park S."/>
            <person name="Patel S."/>
            <person name="Phouanenavong S."/>
            <person name="Wan K."/>
            <person name="Yu C."/>
            <person name="Lewis S.E."/>
            <person name="Rubin G.M."/>
            <person name="Celniker S."/>
        </authorList>
    </citation>
    <scope>NUCLEOTIDE SEQUENCE [LARGE SCALE MRNA] (ISOFORM C)</scope>
    <source>
        <strain evidence="22">Berkeley</strain>
        <tissue evidence="22">Head</tissue>
    </source>
</reference>
<reference evidence="20" key="6">
    <citation type="journal article" date="2003" name="Dev. Biol.">
        <title>Octopamine receptor OAMB is required for ovulation in Drosophila melanogaster.</title>
        <authorList>
            <person name="Lee H.G."/>
            <person name="Seong C.S."/>
            <person name="Kim Y.C."/>
            <person name="Davis R.L."/>
            <person name="Han K.A."/>
        </authorList>
    </citation>
    <scope>FUNCTION</scope>
    <scope>TISSUE SPECIFICITY</scope>
    <scope>DISRUPTION PHENOTYPE</scope>
</reference>
<reference evidence="20" key="7">
    <citation type="journal article" date="2009" name="PLoS ONE">
        <title>The octopamine receptor OAMB mediates ovulation via Ca2+/calmodulin-dependent protein kinase II in the Drosophila oviduct epithelium.</title>
        <authorList>
            <person name="Lee H.G."/>
            <person name="Rohila S."/>
            <person name="Han K.A."/>
        </authorList>
    </citation>
    <scope>FUNCTION</scope>
    <scope>TISSUE SPECIFICITY</scope>
</reference>
<reference evidence="20" key="8">
    <citation type="journal article" date="2010" name="Neuron">
        <title>Identification of a neural circuit that underlies the effects of octopamine on sleep:wake behavior.</title>
        <authorList>
            <person name="Crocker A."/>
            <person name="Shahidullah M."/>
            <person name="Levitan I.B."/>
            <person name="Sehgal A."/>
        </authorList>
    </citation>
    <scope>FUNCTION</scope>
    <scope>DISRUPTION PHENOTYPE</scope>
</reference>
<reference evidence="20" key="9">
    <citation type="journal article" date="2012" name="J. Neurosci.">
        <title>Molecular genetic analysis of sexual rejection: roles of octopamine and its receptor OAMB in Drosophila courtship conditioning.</title>
        <authorList>
            <person name="Zhou C."/>
            <person name="Huang H."/>
            <person name="Kim S.M."/>
            <person name="Lin H."/>
            <person name="Meng X."/>
            <person name="Han K.A."/>
            <person name="Chiang A.S."/>
            <person name="Wang J.W."/>
            <person name="Jiao R."/>
            <person name="Rao Y."/>
        </authorList>
    </citation>
    <scope>FUNCTION</scope>
</reference>
<reference evidence="20" key="10">
    <citation type="journal article" date="2012" name="Nature">
        <title>Layered reward signalling through octopamine and dopamine in Drosophila.</title>
        <authorList>
            <person name="Burke C.J."/>
            <person name="Huetteroth W."/>
            <person name="Owald D."/>
            <person name="Perisse E."/>
            <person name="Krashes M.J."/>
            <person name="Das G."/>
            <person name="Gohl D."/>
            <person name="Silies M."/>
            <person name="Certel S."/>
            <person name="Waddell S."/>
        </authorList>
    </citation>
    <scope>FUNCTION</scope>
</reference>
<reference evidence="20" key="11">
    <citation type="journal article" date="2013" name="J. Neurosci.">
        <title>Appetitive learning requires the alpha1-like octopamine receptor OAMB in the Drosophila mushroom body neurons.</title>
        <authorList>
            <person name="Kim Y.C."/>
            <person name="Lee H.G."/>
            <person name="Lim J."/>
            <person name="Han K.A."/>
        </authorList>
    </citation>
    <scope>FUNCTION</scope>
    <scope>DISRUPTION PHENOTYPE</scope>
</reference>
<reference evidence="20" key="12">
    <citation type="journal article" date="2014" name="PLoS ONE">
        <title>Drosophila insulin-producing cells are differentially modulated by serotonin and octopamine receptors and affect social behavior.</title>
        <authorList>
            <person name="Luo J."/>
            <person name="Lushchak O.V."/>
            <person name="Goergen P."/>
            <person name="Williams M.J."/>
            <person name="Naessel D.R."/>
        </authorList>
    </citation>
    <scope>FUNCTION</scope>
</reference>
<reference evidence="20" key="13">
    <citation type="journal article" date="2015" name="Cell Tissue Res.">
        <title>Expression analysis of octopamine and tyramine receptors in Drosophila.</title>
        <authorList>
            <person name="El-Kholy S."/>
            <person name="Stephano F."/>
            <person name="Li Y."/>
            <person name="Bhandari A."/>
            <person name="Fink C."/>
            <person name="Roeder T."/>
        </authorList>
    </citation>
    <scope>TISSUE SPECIFICITY</scope>
</reference>
<reference evidence="20" key="14">
    <citation type="journal article" date="2015" name="Curr. Biol.">
        <title>Sweet taste and nutrient value subdivide rewarding dopaminergic neurons in Drosophila.</title>
        <authorList>
            <person name="Huetteroth W."/>
            <person name="Perisse E."/>
            <person name="Lin S."/>
            <person name="Klappenbach M."/>
            <person name="Burke C."/>
            <person name="Waddell S."/>
        </authorList>
    </citation>
    <scope>FUNCTION</scope>
</reference>
<reference evidence="20" key="15">
    <citation type="journal article" date="2015" name="PLoS Genet.">
        <title>A follicle rupture assay reveals an essential role for follicular adrenergic signaling in Drosophila ovulation.</title>
        <authorList>
            <person name="Deady L.D."/>
            <person name="Sun J."/>
        </authorList>
    </citation>
    <scope>FUNCTION</scope>
    <scope>DISRUPTION PHENOTYPE</scope>
</reference>
<evidence type="ECO:0000255" key="1"/>
<evidence type="ECO:0000255" key="2">
    <source>
        <dbReference type="PROSITE-ProRule" id="PRU00498"/>
    </source>
</evidence>
<evidence type="ECO:0000255" key="3">
    <source>
        <dbReference type="PROSITE-ProRule" id="PRU00521"/>
    </source>
</evidence>
<evidence type="ECO:0000255" key="4">
    <source>
        <dbReference type="RuleBase" id="RU000688"/>
    </source>
</evidence>
<evidence type="ECO:0000256" key="5">
    <source>
        <dbReference type="SAM" id="MobiDB-lite"/>
    </source>
</evidence>
<evidence type="ECO:0000269" key="6">
    <source>
    </source>
</evidence>
<evidence type="ECO:0000269" key="7">
    <source>
    </source>
</evidence>
<evidence type="ECO:0000269" key="8">
    <source>
    </source>
</evidence>
<evidence type="ECO:0000269" key="9">
    <source>
    </source>
</evidence>
<evidence type="ECO:0000269" key="10">
    <source>
    </source>
</evidence>
<evidence type="ECO:0000269" key="11">
    <source>
    </source>
</evidence>
<evidence type="ECO:0000269" key="12">
    <source>
    </source>
</evidence>
<evidence type="ECO:0000269" key="13">
    <source>
    </source>
</evidence>
<evidence type="ECO:0000269" key="14">
    <source>
    </source>
</evidence>
<evidence type="ECO:0000269" key="15">
    <source>
    </source>
</evidence>
<evidence type="ECO:0000269" key="16">
    <source>
    </source>
</evidence>
<evidence type="ECO:0000269" key="17">
    <source>
    </source>
</evidence>
<evidence type="ECO:0000303" key="18">
    <source>
    </source>
</evidence>
<evidence type="ECO:0000303" key="19">
    <source>
    </source>
</evidence>
<evidence type="ECO:0000305" key="20"/>
<evidence type="ECO:0000312" key="21">
    <source>
        <dbReference type="EMBL" id="AAC17442.1"/>
    </source>
</evidence>
<evidence type="ECO:0000312" key="22">
    <source>
        <dbReference type="EMBL" id="AAQ22572.1"/>
    </source>
</evidence>
<evidence type="ECO:0000312" key="23">
    <source>
        <dbReference type="EMBL" id="CAB38025.1"/>
    </source>
</evidence>
<evidence type="ECO:0000312" key="24">
    <source>
        <dbReference type="EMBL" id="CAB38026.1"/>
    </source>
</evidence>
<evidence type="ECO:0000312" key="25">
    <source>
        <dbReference type="FlyBase" id="FBgn0024944"/>
    </source>
</evidence>
<evidence type="ECO:0000312" key="26">
    <source>
        <dbReference type="Proteomes" id="UP000000803"/>
    </source>
</evidence>
<dbReference type="EMBL" id="AF065443">
    <property type="protein sequence ID" value="AAC17442.1"/>
    <property type="molecule type" value="mRNA"/>
</dbReference>
<dbReference type="EMBL" id="AJ007617">
    <property type="protein sequence ID" value="CAB38025.1"/>
    <property type="molecule type" value="mRNA"/>
</dbReference>
<dbReference type="EMBL" id="AJ007618">
    <property type="protein sequence ID" value="CAB38026.1"/>
    <property type="molecule type" value="mRNA"/>
</dbReference>
<dbReference type="EMBL" id="AE014297">
    <property type="protein sequence ID" value="AAF55796.1"/>
    <property type="molecule type" value="Genomic_DNA"/>
</dbReference>
<dbReference type="EMBL" id="AE014297">
    <property type="protein sequence ID" value="AAF55797.1"/>
    <property type="molecule type" value="Genomic_DNA"/>
</dbReference>
<dbReference type="EMBL" id="AE014297">
    <property type="protein sequence ID" value="AAF55798.2"/>
    <property type="molecule type" value="Genomic_DNA"/>
</dbReference>
<dbReference type="EMBL" id="BT010103">
    <property type="protein sequence ID" value="AAQ22572.1"/>
    <property type="molecule type" value="mRNA"/>
</dbReference>
<dbReference type="RefSeq" id="NP_524669.2">
    <molecule id="Q7JQF1-2"/>
    <property type="nucleotide sequence ID" value="NM_079930.4"/>
</dbReference>
<dbReference type="RefSeq" id="NP_732541.1">
    <molecule id="Q7JQF1-1"/>
    <property type="nucleotide sequence ID" value="NM_169913.2"/>
</dbReference>
<dbReference type="RefSeq" id="NP_732542.1">
    <molecule id="Q7JQF1-1"/>
    <property type="nucleotide sequence ID" value="NM_169914.2"/>
</dbReference>
<dbReference type="SMR" id="Q7JQF1"/>
<dbReference type="FunCoup" id="Q7JQF1">
    <property type="interactions" value="98"/>
</dbReference>
<dbReference type="STRING" id="7227.FBpp0303555"/>
<dbReference type="TCDB" id="9.A.14.3.20">
    <property type="family name" value="the g-protein-coupled receptor (gpcr) family"/>
</dbReference>
<dbReference type="GlyCosmos" id="Q7JQF1">
    <property type="glycosylation" value="2 sites, No reported glycans"/>
</dbReference>
<dbReference type="GlyGen" id="Q7JQF1">
    <property type="glycosylation" value="3 sites"/>
</dbReference>
<dbReference type="PaxDb" id="7227-FBpp0083342"/>
<dbReference type="DNASU" id="43982"/>
<dbReference type="EnsemblMetazoa" id="FBtr0083933">
    <molecule id="Q7JQF1-2"/>
    <property type="protein sequence ID" value="FBpp0083341"/>
    <property type="gene ID" value="FBgn0024944"/>
</dbReference>
<dbReference type="EnsemblMetazoa" id="FBtr0083934">
    <molecule id="Q7JQF1-1"/>
    <property type="protein sequence ID" value="FBpp0083342"/>
    <property type="gene ID" value="FBgn0024944"/>
</dbReference>
<dbReference type="EnsemblMetazoa" id="FBtr0330713">
    <molecule id="Q7JQF1-1"/>
    <property type="protein sequence ID" value="FBpp0303557"/>
    <property type="gene ID" value="FBgn0024944"/>
</dbReference>
<dbReference type="GeneID" id="43982"/>
<dbReference type="KEGG" id="dme:Dmel_CG3856"/>
<dbReference type="UCSC" id="CG3856-RA">
    <molecule id="Q7JQF1-1"/>
    <property type="organism name" value="d. melanogaster"/>
</dbReference>
<dbReference type="UCSC" id="CG3856-RB">
    <property type="organism name" value="d. melanogaster"/>
</dbReference>
<dbReference type="AGR" id="FB:FBgn0024944"/>
<dbReference type="CTD" id="43982"/>
<dbReference type="FlyBase" id="FBgn0024944">
    <property type="gene designation" value="Oamb"/>
</dbReference>
<dbReference type="VEuPathDB" id="VectorBase:FBgn0024944"/>
<dbReference type="eggNOG" id="KOG3656">
    <property type="taxonomic scope" value="Eukaryota"/>
</dbReference>
<dbReference type="GeneTree" id="ENSGT00940000154484"/>
<dbReference type="InParanoid" id="Q7JQF1"/>
<dbReference type="OMA" id="CKCFCKR"/>
<dbReference type="OrthoDB" id="6358729at2759"/>
<dbReference type="PhylomeDB" id="Q7JQF1"/>
<dbReference type="BioGRID-ORCS" id="43982">
    <property type="hits" value="0 hits in 3 CRISPR screens"/>
</dbReference>
<dbReference type="ChiTaRS" id="Oamb">
    <property type="organism name" value="fly"/>
</dbReference>
<dbReference type="GenomeRNAi" id="43982"/>
<dbReference type="PRO" id="PR:Q7JQF1"/>
<dbReference type="Proteomes" id="UP000000803">
    <property type="component" value="Chromosome 3R"/>
</dbReference>
<dbReference type="Bgee" id="FBgn0024944">
    <property type="expression patterns" value="Expressed in distal medullary amacrine neuron Dm9 in insect head and 119 other cell types or tissues"/>
</dbReference>
<dbReference type="ExpressionAtlas" id="Q7JQF1">
    <property type="expression patterns" value="baseline and differential"/>
</dbReference>
<dbReference type="GO" id="GO:0030425">
    <property type="term" value="C:dendrite"/>
    <property type="evidence" value="ECO:0000318"/>
    <property type="project" value="GO_Central"/>
</dbReference>
<dbReference type="GO" id="GO:0016020">
    <property type="term" value="C:membrane"/>
    <property type="evidence" value="ECO:0000303"/>
    <property type="project" value="UniProtKB"/>
</dbReference>
<dbReference type="GO" id="GO:0005886">
    <property type="term" value="C:plasma membrane"/>
    <property type="evidence" value="ECO:0000318"/>
    <property type="project" value="GO_Central"/>
</dbReference>
<dbReference type="GO" id="GO:0045202">
    <property type="term" value="C:synapse"/>
    <property type="evidence" value="ECO:0007669"/>
    <property type="project" value="GOC"/>
</dbReference>
<dbReference type="GO" id="GO:0030594">
    <property type="term" value="F:neurotransmitter receptor activity"/>
    <property type="evidence" value="ECO:0000318"/>
    <property type="project" value="GO_Central"/>
</dbReference>
<dbReference type="GO" id="GO:0004989">
    <property type="term" value="F:octopamine receptor activity"/>
    <property type="evidence" value="ECO:0000314"/>
    <property type="project" value="UniProtKB"/>
</dbReference>
<dbReference type="GO" id="GO:0007268">
    <property type="term" value="P:chemical synaptic transmission"/>
    <property type="evidence" value="ECO:0000318"/>
    <property type="project" value="GO_Central"/>
</dbReference>
<dbReference type="GO" id="GO:1904068">
    <property type="term" value="P:G protein-coupled receptor signaling pathway involved in social behavior"/>
    <property type="evidence" value="ECO:0000315"/>
    <property type="project" value="UniProtKB"/>
</dbReference>
<dbReference type="GO" id="GO:0007187">
    <property type="term" value="P:G protein-coupled receptor signaling pathway, coupled to cyclic nucleotide second messenger"/>
    <property type="evidence" value="ECO:0000318"/>
    <property type="project" value="GO_Central"/>
</dbReference>
<dbReference type="GO" id="GO:0006874">
    <property type="term" value="P:intracellular calcium ion homeostasis"/>
    <property type="evidence" value="ECO:0000314"/>
    <property type="project" value="UniProtKB"/>
</dbReference>
<dbReference type="GO" id="GO:0007612">
    <property type="term" value="P:learning"/>
    <property type="evidence" value="ECO:0000315"/>
    <property type="project" value="FlyBase"/>
</dbReference>
<dbReference type="GO" id="GO:0008049">
    <property type="term" value="P:male courtship behavior"/>
    <property type="evidence" value="ECO:0000315"/>
    <property type="project" value="FlyBase"/>
</dbReference>
<dbReference type="GO" id="GO:0000122">
    <property type="term" value="P:negative regulation of transcription by RNA polymerase II"/>
    <property type="evidence" value="ECO:0000315"/>
    <property type="project" value="UniProtKB"/>
</dbReference>
<dbReference type="GO" id="GO:0030728">
    <property type="term" value="P:ovulation"/>
    <property type="evidence" value="ECO:0000315"/>
    <property type="project" value="FlyBase"/>
</dbReference>
<dbReference type="GO" id="GO:0007200">
    <property type="term" value="P:phospholipase C-activating G protein-coupled receptor signaling pathway"/>
    <property type="evidence" value="ECO:0000314"/>
    <property type="project" value="UniProtKB"/>
</dbReference>
<dbReference type="GO" id="GO:0010841">
    <property type="term" value="P:positive regulation of circadian sleep/wake cycle, wakefulness"/>
    <property type="evidence" value="ECO:0000315"/>
    <property type="project" value="UniProtKB"/>
</dbReference>
<dbReference type="GO" id="GO:1905050">
    <property type="term" value="P:positive regulation of metallopeptidase activity"/>
    <property type="evidence" value="ECO:0000315"/>
    <property type="project" value="UniProtKB"/>
</dbReference>
<dbReference type="GO" id="GO:0060279">
    <property type="term" value="P:positive regulation of ovulation"/>
    <property type="evidence" value="ECO:0000315"/>
    <property type="project" value="UniProtKB"/>
</dbReference>
<dbReference type="GO" id="GO:0090328">
    <property type="term" value="P:regulation of olfactory learning"/>
    <property type="evidence" value="ECO:0000315"/>
    <property type="project" value="UniProtKB"/>
</dbReference>
<dbReference type="GO" id="GO:0060278">
    <property type="term" value="P:regulation of ovulation"/>
    <property type="evidence" value="ECO:0000315"/>
    <property type="project" value="FlyBase"/>
</dbReference>
<dbReference type="GO" id="GO:0006979">
    <property type="term" value="P:response to oxidative stress"/>
    <property type="evidence" value="ECO:0000315"/>
    <property type="project" value="UniProtKB"/>
</dbReference>
<dbReference type="GO" id="GO:0042594">
    <property type="term" value="P:response to starvation"/>
    <property type="evidence" value="ECO:0000315"/>
    <property type="project" value="UniProtKB"/>
</dbReference>
<dbReference type="CDD" id="cd15063">
    <property type="entry name" value="7tmA_Octopamine_R"/>
    <property type="match status" value="1"/>
</dbReference>
<dbReference type="FunFam" id="1.20.1070.10:FF:000351">
    <property type="entry name" value="Octopamine receptor Oamb"/>
    <property type="match status" value="1"/>
</dbReference>
<dbReference type="FunFam" id="1.20.1070.10:FF:000369">
    <property type="entry name" value="octopamine receptor Oamb isoform X1"/>
    <property type="match status" value="1"/>
</dbReference>
<dbReference type="FunFam" id="1.20.1070.10:FF:000581">
    <property type="entry name" value="octopamine receptor Oamb isoform X1"/>
    <property type="match status" value="1"/>
</dbReference>
<dbReference type="Gene3D" id="1.20.1070.10">
    <property type="entry name" value="Rhodopsin 7-helix transmembrane proteins"/>
    <property type="match status" value="3"/>
</dbReference>
<dbReference type="InterPro" id="IPR000276">
    <property type="entry name" value="GPCR_Rhodpsn"/>
</dbReference>
<dbReference type="InterPro" id="IPR017452">
    <property type="entry name" value="GPCR_Rhodpsn_7TM"/>
</dbReference>
<dbReference type="PANTHER" id="PTHR24248">
    <property type="entry name" value="ADRENERGIC RECEPTOR-RELATED G-PROTEIN COUPLED RECEPTOR"/>
    <property type="match status" value="1"/>
</dbReference>
<dbReference type="PANTHER" id="PTHR24248:SF174">
    <property type="entry name" value="TYRAMINE_OCTOPAMINE RECEPTOR"/>
    <property type="match status" value="1"/>
</dbReference>
<dbReference type="Pfam" id="PF00001">
    <property type="entry name" value="7tm_1"/>
    <property type="match status" value="2"/>
</dbReference>
<dbReference type="PRINTS" id="PR00237">
    <property type="entry name" value="GPCRRHODOPSN"/>
</dbReference>
<dbReference type="SMART" id="SM01381">
    <property type="entry name" value="7TM_GPCR_Srsx"/>
    <property type="match status" value="1"/>
</dbReference>
<dbReference type="SUPFAM" id="SSF81321">
    <property type="entry name" value="Family A G protein-coupled receptor-like"/>
    <property type="match status" value="1"/>
</dbReference>
<dbReference type="PROSITE" id="PS00237">
    <property type="entry name" value="G_PROTEIN_RECEP_F1_1"/>
    <property type="match status" value="1"/>
</dbReference>
<dbReference type="PROSITE" id="PS50262">
    <property type="entry name" value="G_PROTEIN_RECEP_F1_2"/>
    <property type="match status" value="1"/>
</dbReference>